<accession>A7Z789</accession>
<name>MINC_BACVZ</name>
<comment type="function">
    <text evidence="1">Cell division inhibitor that blocks the formation of polar Z ring septums. Rapidly oscillates between the poles of the cell to destabilize FtsZ filaments that have formed before they mature into polar Z rings. Prevents FtsZ polymerization.</text>
</comment>
<comment type="subunit">
    <text evidence="1">Interacts with MinD and FtsZ.</text>
</comment>
<comment type="similarity">
    <text evidence="1">Belongs to the MinC family.</text>
</comment>
<keyword id="KW-0131">Cell cycle</keyword>
<keyword id="KW-0132">Cell division</keyword>
<keyword id="KW-0717">Septation</keyword>
<sequence>MKTKKQQYVTIKGTKNGLTLHLDDACSFDELLDGLQNMLSIEQYTDGKGQKISVHIKLGHRYLYQEQAEKLTDLIASKKDLVVHSIDSEVIAKEEAQRMKEEQEIVSVSKIVRSGQVLHVTGDLLLIGDVNPGGTIRAGGNIFVLGSLKGIAHAGYNGNNRAVIAASEMMPTQLRINHVLNRSPDHIQKGNDMECAYLDTDGNMVIERLQQLAHLRPDLTRLEGGM</sequence>
<evidence type="ECO:0000255" key="1">
    <source>
        <dbReference type="HAMAP-Rule" id="MF_00267"/>
    </source>
</evidence>
<proteinExistence type="inferred from homology"/>
<gene>
    <name evidence="1" type="primary">minC</name>
    <name type="ordered locus">RBAM_025050</name>
</gene>
<reference key="1">
    <citation type="journal article" date="2007" name="Nat. Biotechnol.">
        <title>Comparative analysis of the complete genome sequence of the plant growth-promoting bacterium Bacillus amyloliquefaciens FZB42.</title>
        <authorList>
            <person name="Chen X.H."/>
            <person name="Koumoutsi A."/>
            <person name="Scholz R."/>
            <person name="Eisenreich A."/>
            <person name="Schneider K."/>
            <person name="Heinemeyer I."/>
            <person name="Morgenstern B."/>
            <person name="Voss B."/>
            <person name="Hess W.R."/>
            <person name="Reva O."/>
            <person name="Junge H."/>
            <person name="Voigt B."/>
            <person name="Jungblut P.R."/>
            <person name="Vater J."/>
            <person name="Suessmuth R."/>
            <person name="Liesegang H."/>
            <person name="Strittmatter A."/>
            <person name="Gottschalk G."/>
            <person name="Borriss R."/>
        </authorList>
    </citation>
    <scope>NUCLEOTIDE SEQUENCE [LARGE SCALE GENOMIC DNA]</scope>
    <source>
        <strain>DSM 23117 / BGSC 10A6 / LMG 26770 / FZB42</strain>
    </source>
</reference>
<feature type="chain" id="PRO_1000047799" description="Probable septum site-determining protein MinC">
    <location>
        <begin position="1"/>
        <end position="226"/>
    </location>
</feature>
<dbReference type="EMBL" id="CP000560">
    <property type="protein sequence ID" value="ABS74865.1"/>
    <property type="molecule type" value="Genomic_DNA"/>
</dbReference>
<dbReference type="RefSeq" id="WP_012118104.1">
    <property type="nucleotide sequence ID" value="NC_009725.2"/>
</dbReference>
<dbReference type="SMR" id="A7Z789"/>
<dbReference type="GeneID" id="93081647"/>
<dbReference type="KEGG" id="bay:RBAM_025050"/>
<dbReference type="HOGENOM" id="CLU_048711_1_1_9"/>
<dbReference type="Proteomes" id="UP000001120">
    <property type="component" value="Chromosome"/>
</dbReference>
<dbReference type="GO" id="GO:0000902">
    <property type="term" value="P:cell morphogenesis"/>
    <property type="evidence" value="ECO:0007669"/>
    <property type="project" value="InterPro"/>
</dbReference>
<dbReference type="GO" id="GO:0000917">
    <property type="term" value="P:division septum assembly"/>
    <property type="evidence" value="ECO:0007669"/>
    <property type="project" value="UniProtKB-KW"/>
</dbReference>
<dbReference type="GO" id="GO:1901891">
    <property type="term" value="P:regulation of cell septum assembly"/>
    <property type="evidence" value="ECO:0007669"/>
    <property type="project" value="InterPro"/>
</dbReference>
<dbReference type="FunFam" id="2.160.20.70:FF:000003">
    <property type="entry name" value="Probable septum site-determining protein MinC"/>
    <property type="match status" value="1"/>
</dbReference>
<dbReference type="Gene3D" id="2.160.20.70">
    <property type="match status" value="1"/>
</dbReference>
<dbReference type="Gene3D" id="3.30.160.540">
    <property type="match status" value="1"/>
</dbReference>
<dbReference type="HAMAP" id="MF_00267">
    <property type="entry name" value="MinC"/>
    <property type="match status" value="1"/>
</dbReference>
<dbReference type="InterPro" id="IPR016098">
    <property type="entry name" value="CAP/MinC_C"/>
</dbReference>
<dbReference type="InterPro" id="IPR013033">
    <property type="entry name" value="MinC"/>
</dbReference>
<dbReference type="InterPro" id="IPR036145">
    <property type="entry name" value="MinC_C_sf"/>
</dbReference>
<dbReference type="InterPro" id="IPR055219">
    <property type="entry name" value="MinC_N_1"/>
</dbReference>
<dbReference type="InterPro" id="IPR005526">
    <property type="entry name" value="Septum_form_inhib_MinC_C"/>
</dbReference>
<dbReference type="NCBIfam" id="TIGR01222">
    <property type="entry name" value="minC"/>
    <property type="match status" value="1"/>
</dbReference>
<dbReference type="PANTHER" id="PTHR34108">
    <property type="entry name" value="SEPTUM SITE-DETERMINING PROTEIN MINC"/>
    <property type="match status" value="1"/>
</dbReference>
<dbReference type="PANTHER" id="PTHR34108:SF1">
    <property type="entry name" value="SEPTUM SITE-DETERMINING PROTEIN MINC"/>
    <property type="match status" value="1"/>
</dbReference>
<dbReference type="Pfam" id="PF03775">
    <property type="entry name" value="MinC_C"/>
    <property type="match status" value="1"/>
</dbReference>
<dbReference type="Pfam" id="PF22642">
    <property type="entry name" value="MinC_N_1"/>
    <property type="match status" value="1"/>
</dbReference>
<dbReference type="SUPFAM" id="SSF63848">
    <property type="entry name" value="Cell-division inhibitor MinC, C-terminal domain"/>
    <property type="match status" value="1"/>
</dbReference>
<organism>
    <name type="scientific">Bacillus velezensis (strain DSM 23117 / BGSC 10A6 / LMG 26770 / FZB42)</name>
    <name type="common">Bacillus amyloliquefaciens subsp. plantarum</name>
    <dbReference type="NCBI Taxonomy" id="326423"/>
    <lineage>
        <taxon>Bacteria</taxon>
        <taxon>Bacillati</taxon>
        <taxon>Bacillota</taxon>
        <taxon>Bacilli</taxon>
        <taxon>Bacillales</taxon>
        <taxon>Bacillaceae</taxon>
        <taxon>Bacillus</taxon>
        <taxon>Bacillus amyloliquefaciens group</taxon>
    </lineage>
</organism>
<protein>
    <recommendedName>
        <fullName evidence="1">Probable septum site-determining protein MinC</fullName>
    </recommendedName>
</protein>